<keyword id="KW-0238">DNA-binding</keyword>
<keyword id="KW-1185">Reference proteome</keyword>
<keyword id="KW-0677">Repeat</keyword>
<keyword id="KW-0804">Transcription</keyword>
<keyword id="KW-0805">Transcription regulation</keyword>
<sequence length="202" mass="22330">MVGAVTQIADRPTDPSPWSPRETELLAVTLRLLQEHGYDRLTVDAVAASARASKATVYRRWPSKAELVLAAFIEGIRQVAVPPNTGNLRDDLLRLGELICREVGQHASTIRAVLVEVSRNPALNDVLQHQFVDHRKALIQYILQQAVDRGEISSAAISDELWDLLPGYLIFRSIIPNRPPTQDTVQALVDDVILPSLTRSTG</sequence>
<reference key="1">
    <citation type="journal article" date="2002" name="J. Bacteriol.">
        <title>Whole-genome comparison of Mycobacterium tuberculosis clinical and laboratory strains.</title>
        <authorList>
            <person name="Fleischmann R.D."/>
            <person name="Alland D."/>
            <person name="Eisen J.A."/>
            <person name="Carpenter L."/>
            <person name="White O."/>
            <person name="Peterson J.D."/>
            <person name="DeBoy R.T."/>
            <person name="Dodson R.J."/>
            <person name="Gwinn M.L."/>
            <person name="Haft D.H."/>
            <person name="Hickey E.K."/>
            <person name="Kolonay J.F."/>
            <person name="Nelson W.C."/>
            <person name="Umayam L.A."/>
            <person name="Ermolaeva M.D."/>
            <person name="Salzberg S.L."/>
            <person name="Delcher A."/>
            <person name="Utterback T.R."/>
            <person name="Weidman J.F."/>
            <person name="Khouri H.M."/>
            <person name="Gill J."/>
            <person name="Mikula A."/>
            <person name="Bishai W."/>
            <person name="Jacobs W.R. Jr."/>
            <person name="Venter J.C."/>
            <person name="Fraser C.M."/>
        </authorList>
    </citation>
    <scope>NUCLEOTIDE SEQUENCE [LARGE SCALE GENOMIC DNA]</scope>
    <source>
        <strain>CDC 1551 / Oshkosh</strain>
    </source>
</reference>
<evidence type="ECO:0000255" key="1">
    <source>
        <dbReference type="PROSITE-ProRule" id="PRU00335"/>
    </source>
</evidence>
<evidence type="ECO:0000256" key="2">
    <source>
        <dbReference type="SAM" id="MobiDB-lite"/>
    </source>
</evidence>
<name>Y1556_MYCTO</name>
<gene>
    <name type="ordered locus">MT1607</name>
</gene>
<dbReference type="EMBL" id="AE000516">
    <property type="protein sequence ID" value="AAK45874.1"/>
    <property type="molecule type" value="Genomic_DNA"/>
</dbReference>
<dbReference type="PIR" id="A70763">
    <property type="entry name" value="A70763"/>
</dbReference>
<dbReference type="RefSeq" id="WP_003407773.1">
    <property type="nucleotide sequence ID" value="NZ_KK341227.1"/>
</dbReference>
<dbReference type="SMR" id="P9WMD0"/>
<dbReference type="KEGG" id="mtc:MT1607"/>
<dbReference type="PATRIC" id="fig|83331.31.peg.1729"/>
<dbReference type="HOGENOM" id="CLU_069356_25_3_11"/>
<dbReference type="Proteomes" id="UP000001020">
    <property type="component" value="Chromosome"/>
</dbReference>
<dbReference type="GO" id="GO:0003700">
    <property type="term" value="F:DNA-binding transcription factor activity"/>
    <property type="evidence" value="ECO:0007669"/>
    <property type="project" value="TreeGrafter"/>
</dbReference>
<dbReference type="GO" id="GO:0000976">
    <property type="term" value="F:transcription cis-regulatory region binding"/>
    <property type="evidence" value="ECO:0007669"/>
    <property type="project" value="TreeGrafter"/>
</dbReference>
<dbReference type="Gene3D" id="1.10.10.60">
    <property type="entry name" value="Homeodomain-like"/>
    <property type="match status" value="1"/>
</dbReference>
<dbReference type="Gene3D" id="1.10.357.10">
    <property type="entry name" value="Tetracycline Repressor, domain 2"/>
    <property type="match status" value="1"/>
</dbReference>
<dbReference type="InterPro" id="IPR023772">
    <property type="entry name" value="DNA-bd_HTH_TetR-type_CS"/>
</dbReference>
<dbReference type="InterPro" id="IPR009057">
    <property type="entry name" value="Homeodomain-like_sf"/>
</dbReference>
<dbReference type="InterPro" id="IPR050109">
    <property type="entry name" value="HTH-type_TetR-like_transc_reg"/>
</dbReference>
<dbReference type="InterPro" id="IPR001647">
    <property type="entry name" value="HTH_TetR"/>
</dbReference>
<dbReference type="InterPro" id="IPR036271">
    <property type="entry name" value="Tet_transcr_reg_TetR-rel_C_sf"/>
</dbReference>
<dbReference type="InterPro" id="IPR011075">
    <property type="entry name" value="TetR_C"/>
</dbReference>
<dbReference type="PANTHER" id="PTHR30055">
    <property type="entry name" value="HTH-TYPE TRANSCRIPTIONAL REGULATOR RUTR"/>
    <property type="match status" value="1"/>
</dbReference>
<dbReference type="PANTHER" id="PTHR30055:SF149">
    <property type="entry name" value="TETR-FAMILY TRANSCRIPTIONAL REGULATOR"/>
    <property type="match status" value="1"/>
</dbReference>
<dbReference type="Pfam" id="PF16859">
    <property type="entry name" value="TetR_C_11"/>
    <property type="match status" value="1"/>
</dbReference>
<dbReference type="Pfam" id="PF00440">
    <property type="entry name" value="TetR_N"/>
    <property type="match status" value="1"/>
</dbReference>
<dbReference type="PRINTS" id="PR00455">
    <property type="entry name" value="HTHTETR"/>
</dbReference>
<dbReference type="SUPFAM" id="SSF46689">
    <property type="entry name" value="Homeodomain-like"/>
    <property type="match status" value="1"/>
</dbReference>
<dbReference type="SUPFAM" id="SSF48498">
    <property type="entry name" value="Tetracyclin repressor-like, C-terminal domain"/>
    <property type="match status" value="1"/>
</dbReference>
<dbReference type="PROSITE" id="PS01081">
    <property type="entry name" value="HTH_TETR_1"/>
    <property type="match status" value="1"/>
</dbReference>
<dbReference type="PROSITE" id="PS50977">
    <property type="entry name" value="HTH_TETR_2"/>
    <property type="match status" value="1"/>
</dbReference>
<organism>
    <name type="scientific">Mycobacterium tuberculosis (strain CDC 1551 / Oshkosh)</name>
    <dbReference type="NCBI Taxonomy" id="83331"/>
    <lineage>
        <taxon>Bacteria</taxon>
        <taxon>Bacillati</taxon>
        <taxon>Actinomycetota</taxon>
        <taxon>Actinomycetes</taxon>
        <taxon>Mycobacteriales</taxon>
        <taxon>Mycobacteriaceae</taxon>
        <taxon>Mycobacterium</taxon>
        <taxon>Mycobacterium tuberculosis complex</taxon>
    </lineage>
</organism>
<protein>
    <recommendedName>
        <fullName>Uncharacterized HTH-type transcriptional regulator MT1607</fullName>
    </recommendedName>
</protein>
<accession>P9WMD0</accession>
<accession>L0T8L5</accession>
<accession>P67436</accession>
<accession>Q10774</accession>
<accession>Q79FM7</accession>
<feature type="chain" id="PRO_0000427325" description="Uncharacterized HTH-type transcriptional regulator MT1607">
    <location>
        <begin position="1"/>
        <end position="202"/>
    </location>
</feature>
<feature type="domain" description="HTH tetR-type" evidence="1">
    <location>
        <begin position="19"/>
        <end position="79"/>
    </location>
</feature>
<feature type="region of interest" description="Disordered" evidence="2">
    <location>
        <begin position="1"/>
        <end position="20"/>
    </location>
</feature>
<proteinExistence type="predicted"/>